<gene>
    <name evidence="1" type="primary">mdh</name>
    <name type="ordered locus">AZOSEA38300</name>
    <name type="ORF">ebA6695</name>
</gene>
<dbReference type="EC" id="1.1.1.37" evidence="1"/>
<dbReference type="EMBL" id="CR555306">
    <property type="protein sequence ID" value="CAI09955.1"/>
    <property type="molecule type" value="Genomic_DNA"/>
</dbReference>
<dbReference type="RefSeq" id="WP_011239606.1">
    <property type="nucleotide sequence ID" value="NC_006513.1"/>
</dbReference>
<dbReference type="SMR" id="Q5NYA9"/>
<dbReference type="STRING" id="76114.ebA6695"/>
<dbReference type="KEGG" id="eba:ebA6695"/>
<dbReference type="eggNOG" id="COG0039">
    <property type="taxonomic scope" value="Bacteria"/>
</dbReference>
<dbReference type="HOGENOM" id="CLU_040727_2_0_4"/>
<dbReference type="OrthoDB" id="9802969at2"/>
<dbReference type="Proteomes" id="UP000006552">
    <property type="component" value="Chromosome"/>
</dbReference>
<dbReference type="GO" id="GO:0030060">
    <property type="term" value="F:L-malate dehydrogenase (NAD+) activity"/>
    <property type="evidence" value="ECO:0007669"/>
    <property type="project" value="UniProtKB-UniRule"/>
</dbReference>
<dbReference type="GO" id="GO:0006108">
    <property type="term" value="P:malate metabolic process"/>
    <property type="evidence" value="ECO:0007669"/>
    <property type="project" value="InterPro"/>
</dbReference>
<dbReference type="GO" id="GO:0006099">
    <property type="term" value="P:tricarboxylic acid cycle"/>
    <property type="evidence" value="ECO:0007669"/>
    <property type="project" value="UniProtKB-UniRule"/>
</dbReference>
<dbReference type="CDD" id="cd01338">
    <property type="entry name" value="MDH_chloroplast-like"/>
    <property type="match status" value="1"/>
</dbReference>
<dbReference type="FunFam" id="3.40.50.720:FF:000010">
    <property type="entry name" value="Malate dehydrogenase"/>
    <property type="match status" value="1"/>
</dbReference>
<dbReference type="FunFam" id="3.90.110.10:FF:000002">
    <property type="entry name" value="Malate dehydrogenase"/>
    <property type="match status" value="1"/>
</dbReference>
<dbReference type="Gene3D" id="3.90.110.10">
    <property type="entry name" value="Lactate dehydrogenase/glycoside hydrolase, family 4, C-terminal"/>
    <property type="match status" value="1"/>
</dbReference>
<dbReference type="Gene3D" id="3.40.50.720">
    <property type="entry name" value="NAD(P)-binding Rossmann-like Domain"/>
    <property type="match status" value="1"/>
</dbReference>
<dbReference type="HAMAP" id="MF_01517">
    <property type="entry name" value="Malate_dehydrog_2"/>
    <property type="match status" value="1"/>
</dbReference>
<dbReference type="InterPro" id="IPR001557">
    <property type="entry name" value="L-lactate/malate_DH"/>
</dbReference>
<dbReference type="InterPro" id="IPR022383">
    <property type="entry name" value="Lactate/malate_DH_C"/>
</dbReference>
<dbReference type="InterPro" id="IPR001236">
    <property type="entry name" value="Lactate/malate_DH_N"/>
</dbReference>
<dbReference type="InterPro" id="IPR015955">
    <property type="entry name" value="Lactate_DH/Glyco_Ohase_4_C"/>
</dbReference>
<dbReference type="InterPro" id="IPR010945">
    <property type="entry name" value="Malate_DH_type2"/>
</dbReference>
<dbReference type="InterPro" id="IPR036291">
    <property type="entry name" value="NAD(P)-bd_dom_sf"/>
</dbReference>
<dbReference type="NCBIfam" id="TIGR01759">
    <property type="entry name" value="MalateDH-SF1"/>
    <property type="match status" value="1"/>
</dbReference>
<dbReference type="NCBIfam" id="NF003916">
    <property type="entry name" value="PRK05442.1"/>
    <property type="match status" value="1"/>
</dbReference>
<dbReference type="PANTHER" id="PTHR23382">
    <property type="entry name" value="MALATE DEHYDROGENASE"/>
    <property type="match status" value="1"/>
</dbReference>
<dbReference type="Pfam" id="PF02866">
    <property type="entry name" value="Ldh_1_C"/>
    <property type="match status" value="1"/>
</dbReference>
<dbReference type="Pfam" id="PF00056">
    <property type="entry name" value="Ldh_1_N"/>
    <property type="match status" value="1"/>
</dbReference>
<dbReference type="PIRSF" id="PIRSF000102">
    <property type="entry name" value="Lac_mal_DH"/>
    <property type="match status" value="1"/>
</dbReference>
<dbReference type="SUPFAM" id="SSF56327">
    <property type="entry name" value="LDH C-terminal domain-like"/>
    <property type="match status" value="1"/>
</dbReference>
<dbReference type="SUPFAM" id="SSF51735">
    <property type="entry name" value="NAD(P)-binding Rossmann-fold domains"/>
    <property type="match status" value="1"/>
</dbReference>
<keyword id="KW-0520">NAD</keyword>
<keyword id="KW-0560">Oxidoreductase</keyword>
<keyword id="KW-1185">Reference proteome</keyword>
<keyword id="KW-0816">Tricarboxylic acid cycle</keyword>
<reference key="1">
    <citation type="journal article" date="2005" name="Arch. Microbiol.">
        <title>The genome sequence of an anaerobic aromatic-degrading denitrifying bacterium, strain EbN1.</title>
        <authorList>
            <person name="Rabus R."/>
            <person name="Kube M."/>
            <person name="Heider J."/>
            <person name="Beck A."/>
            <person name="Heitmann K."/>
            <person name="Widdel F."/>
            <person name="Reinhardt R."/>
        </authorList>
    </citation>
    <scope>NUCLEOTIDE SEQUENCE [LARGE SCALE GENOMIC DNA]</scope>
    <source>
        <strain>DSM 19018 / LMG 30748 / EbN1</strain>
    </source>
</reference>
<proteinExistence type="inferred from homology"/>
<comment type="function">
    <text evidence="1">Catalyzes the reversible oxidation of malate to oxaloacetate.</text>
</comment>
<comment type="catalytic activity">
    <reaction evidence="1">
        <text>(S)-malate + NAD(+) = oxaloacetate + NADH + H(+)</text>
        <dbReference type="Rhea" id="RHEA:21432"/>
        <dbReference type="ChEBI" id="CHEBI:15378"/>
        <dbReference type="ChEBI" id="CHEBI:15589"/>
        <dbReference type="ChEBI" id="CHEBI:16452"/>
        <dbReference type="ChEBI" id="CHEBI:57540"/>
        <dbReference type="ChEBI" id="CHEBI:57945"/>
        <dbReference type="EC" id="1.1.1.37"/>
    </reaction>
</comment>
<comment type="similarity">
    <text evidence="1">Belongs to the LDH/MDH superfamily. MDH type 2 family.</text>
</comment>
<organism>
    <name type="scientific">Aromatoleum aromaticum (strain DSM 19018 / LMG 30748 / EbN1)</name>
    <name type="common">Azoarcus sp. (strain EbN1)</name>
    <dbReference type="NCBI Taxonomy" id="76114"/>
    <lineage>
        <taxon>Bacteria</taxon>
        <taxon>Pseudomonadati</taxon>
        <taxon>Pseudomonadota</taxon>
        <taxon>Betaproteobacteria</taxon>
        <taxon>Rhodocyclales</taxon>
        <taxon>Rhodocyclaceae</taxon>
        <taxon>Aromatoleum</taxon>
    </lineage>
</organism>
<feature type="chain" id="PRO_0000113347" description="Malate dehydrogenase">
    <location>
        <begin position="1"/>
        <end position="329"/>
    </location>
</feature>
<feature type="active site" description="Proton acceptor" evidence="1">
    <location>
        <position position="191"/>
    </location>
</feature>
<feature type="binding site" evidence="1">
    <location>
        <begin position="12"/>
        <end position="18"/>
    </location>
    <ligand>
        <name>NAD(+)</name>
        <dbReference type="ChEBI" id="CHEBI:57540"/>
    </ligand>
</feature>
<feature type="binding site" evidence="1">
    <location>
        <position position="93"/>
    </location>
    <ligand>
        <name>substrate</name>
    </ligand>
</feature>
<feature type="binding site" evidence="1">
    <location>
        <position position="99"/>
    </location>
    <ligand>
        <name>substrate</name>
    </ligand>
</feature>
<feature type="binding site" evidence="1">
    <location>
        <position position="106"/>
    </location>
    <ligand>
        <name>NAD(+)</name>
        <dbReference type="ChEBI" id="CHEBI:57540"/>
    </ligand>
</feature>
<feature type="binding site" evidence="1">
    <location>
        <position position="113"/>
    </location>
    <ligand>
        <name>NAD(+)</name>
        <dbReference type="ChEBI" id="CHEBI:57540"/>
    </ligand>
</feature>
<feature type="binding site" evidence="1">
    <location>
        <begin position="130"/>
        <end position="132"/>
    </location>
    <ligand>
        <name>NAD(+)</name>
        <dbReference type="ChEBI" id="CHEBI:57540"/>
    </ligand>
</feature>
<feature type="binding site" evidence="1">
    <location>
        <position position="132"/>
    </location>
    <ligand>
        <name>substrate</name>
    </ligand>
</feature>
<feature type="binding site" evidence="1">
    <location>
        <position position="166"/>
    </location>
    <ligand>
        <name>substrate</name>
    </ligand>
</feature>
<accession>Q5NYA9</accession>
<evidence type="ECO:0000255" key="1">
    <source>
        <dbReference type="HAMAP-Rule" id="MF_01517"/>
    </source>
</evidence>
<name>MDH_AROAE</name>
<protein>
    <recommendedName>
        <fullName evidence="1">Malate dehydrogenase</fullName>
        <ecNumber evidence="1">1.1.1.37</ecNumber>
    </recommendedName>
</protein>
<sequence length="329" mass="35032">MSKAPVRVAVTGAAGQIGYSLLFRIASGEMLGKDQPVILQLLDLPQAQKAVKGVMMELEDCAFPLLAGMVATDDPNVAFKDADYCLLVGARPRGPGMERADLLTANGAIFTVQGKAIAENANENVKVLVVGNPCNTNAYIAGAAARKVGRTNPNNYHGMLRLDHNRALSQLAAKTGRPVSSLKKMVVWGNHSPTMYADYRFCTSNGDSVKALVNDHAWNNDVFLPTVGKRGAAIIDARGLSSAASAANAAIDHMHDWALGSDDWVTMGVPSDGSYGIPAGVVFGVPCECKNGDFKIIQGLEIDEYSREKINKTLGELEDERAAVADMLK</sequence>